<feature type="chain" id="PRO_0000357237" description="Methylthioribose-1-phosphate isomerase">
    <location>
        <begin position="1"/>
        <end position="342"/>
    </location>
</feature>
<feature type="active site" description="Proton donor" evidence="1">
    <location>
        <position position="228"/>
    </location>
</feature>
<feature type="binding site" evidence="1">
    <location>
        <begin position="49"/>
        <end position="51"/>
    </location>
    <ligand>
        <name>substrate</name>
    </ligand>
</feature>
<feature type="binding site" evidence="1">
    <location>
        <position position="86"/>
    </location>
    <ligand>
        <name>substrate</name>
    </ligand>
</feature>
<feature type="binding site" evidence="1">
    <location>
        <position position="187"/>
    </location>
    <ligand>
        <name>substrate</name>
    </ligand>
</feature>
<feature type="binding site" evidence="1">
    <location>
        <begin position="238"/>
        <end position="239"/>
    </location>
    <ligand>
        <name>substrate</name>
    </ligand>
</feature>
<feature type="site" description="Transition state stabilizer" evidence="1">
    <location>
        <position position="148"/>
    </location>
</feature>
<comment type="function">
    <text evidence="1">Catalyzes the interconversion of methylthioribose-1-phosphate (MTR-1-P) into methylthioribulose-1-phosphate (MTRu-1-P).</text>
</comment>
<comment type="catalytic activity">
    <reaction evidence="1">
        <text>5-(methylsulfanyl)-alpha-D-ribose 1-phosphate = 5-(methylsulfanyl)-D-ribulose 1-phosphate</text>
        <dbReference type="Rhea" id="RHEA:19989"/>
        <dbReference type="ChEBI" id="CHEBI:58533"/>
        <dbReference type="ChEBI" id="CHEBI:58548"/>
        <dbReference type="EC" id="5.3.1.23"/>
    </reaction>
</comment>
<comment type="pathway">
    <text evidence="1">Amino-acid biosynthesis; L-methionine biosynthesis via salvage pathway; L-methionine from S-methyl-5-thio-alpha-D-ribose 1-phosphate: step 1/6.</text>
</comment>
<comment type="similarity">
    <text evidence="2">Belongs to the eIF-2B alpha/beta/delta subunits family. MtnA subfamily.</text>
</comment>
<evidence type="ECO:0000255" key="1">
    <source>
        <dbReference type="HAMAP-Rule" id="MF_01678"/>
    </source>
</evidence>
<evidence type="ECO:0000305" key="2"/>
<reference key="1">
    <citation type="submission" date="2007-09" db="EMBL/GenBank/DDBJ databases">
        <title>Complete sequence of chromosome of Serratia proteamaculans 568.</title>
        <authorList>
            <consortium name="US DOE Joint Genome Institute"/>
            <person name="Copeland A."/>
            <person name="Lucas S."/>
            <person name="Lapidus A."/>
            <person name="Barry K."/>
            <person name="Glavina del Rio T."/>
            <person name="Dalin E."/>
            <person name="Tice H."/>
            <person name="Pitluck S."/>
            <person name="Chain P."/>
            <person name="Malfatti S."/>
            <person name="Shin M."/>
            <person name="Vergez L."/>
            <person name="Schmutz J."/>
            <person name="Larimer F."/>
            <person name="Land M."/>
            <person name="Hauser L."/>
            <person name="Kyrpides N."/>
            <person name="Kim E."/>
            <person name="Taghavi S."/>
            <person name="Newman L."/>
            <person name="Vangronsveld J."/>
            <person name="van der Lelie D."/>
            <person name="Richardson P."/>
        </authorList>
    </citation>
    <scope>NUCLEOTIDE SEQUENCE [LARGE SCALE GENOMIC DNA]</scope>
    <source>
        <strain>568</strain>
    </source>
</reference>
<sequence>MQALNTTSLTLSDNRLLILDQQALPQEKQWRSCDSVEELVDHILTLRVRGAPLIGLSASLLLALLAERGVPRKELEQALITLRASRPTAVNLMNNLDRMKLALAQPQWVPAMVEEAQRLVEEDRKLCDRIADHGAGLVKPGSRLLTHCNTGGLATAGIGTAIGVLLRAHQQGKVQQVWVDETRPLLQGGRLTAWELGELGIPYRLICDSMAASLMAQGQVDAVWVGADRIAANGDVANKIGTYSLAVLAHYHRIPFYVAAPHTTHDPHCPNGAAIAIEQRAAVEVTGVTGSFGSCQWAPVDAPVYNPAFDVTPAALISGWVFDSGVITPQQVSEGIFQRALG</sequence>
<gene>
    <name evidence="1" type="primary">mtnA</name>
    <name type="ordered locus">Spro_0945</name>
</gene>
<protein>
    <recommendedName>
        <fullName evidence="1">Methylthioribose-1-phosphate isomerase</fullName>
        <shortName evidence="1">M1Pi</shortName>
        <shortName evidence="1">MTR-1-P isomerase</shortName>
        <ecNumber evidence="1">5.3.1.23</ecNumber>
    </recommendedName>
    <alternativeName>
        <fullName evidence="1">S-methyl-5-thioribose-1-phosphate isomerase</fullName>
    </alternativeName>
</protein>
<keyword id="KW-0028">Amino-acid biosynthesis</keyword>
<keyword id="KW-0413">Isomerase</keyword>
<keyword id="KW-0486">Methionine biosynthesis</keyword>
<organism>
    <name type="scientific">Serratia proteamaculans (strain 568)</name>
    <dbReference type="NCBI Taxonomy" id="399741"/>
    <lineage>
        <taxon>Bacteria</taxon>
        <taxon>Pseudomonadati</taxon>
        <taxon>Pseudomonadota</taxon>
        <taxon>Gammaproteobacteria</taxon>
        <taxon>Enterobacterales</taxon>
        <taxon>Yersiniaceae</taxon>
        <taxon>Serratia</taxon>
    </lineage>
</organism>
<proteinExistence type="inferred from homology"/>
<dbReference type="EC" id="5.3.1.23" evidence="1"/>
<dbReference type="EMBL" id="CP000826">
    <property type="protein sequence ID" value="ABV40051.1"/>
    <property type="molecule type" value="Genomic_DNA"/>
</dbReference>
<dbReference type="SMR" id="A8GAB1"/>
<dbReference type="STRING" id="399741.Spro_0945"/>
<dbReference type="KEGG" id="spe:Spro_0945"/>
<dbReference type="eggNOG" id="COG0182">
    <property type="taxonomic scope" value="Bacteria"/>
</dbReference>
<dbReference type="HOGENOM" id="CLU_016218_1_2_6"/>
<dbReference type="OrthoDB" id="9803436at2"/>
<dbReference type="UniPathway" id="UPA00904">
    <property type="reaction ID" value="UER00874"/>
</dbReference>
<dbReference type="GO" id="GO:0046523">
    <property type="term" value="F:S-methyl-5-thioribose-1-phosphate isomerase activity"/>
    <property type="evidence" value="ECO:0007669"/>
    <property type="project" value="UniProtKB-UniRule"/>
</dbReference>
<dbReference type="GO" id="GO:0019509">
    <property type="term" value="P:L-methionine salvage from methylthioadenosine"/>
    <property type="evidence" value="ECO:0007669"/>
    <property type="project" value="UniProtKB-UniRule"/>
</dbReference>
<dbReference type="FunFam" id="3.40.50.10470:FF:000006">
    <property type="entry name" value="Methylthioribose-1-phosphate isomerase"/>
    <property type="match status" value="1"/>
</dbReference>
<dbReference type="Gene3D" id="1.20.120.420">
    <property type="entry name" value="translation initiation factor eif-2b, domain 1"/>
    <property type="match status" value="1"/>
</dbReference>
<dbReference type="Gene3D" id="3.40.50.10470">
    <property type="entry name" value="Translation initiation factor eif-2b, domain 2"/>
    <property type="match status" value="1"/>
</dbReference>
<dbReference type="HAMAP" id="MF_01678">
    <property type="entry name" value="Salvage_MtnA"/>
    <property type="match status" value="1"/>
</dbReference>
<dbReference type="InterPro" id="IPR000649">
    <property type="entry name" value="IF-2B-related"/>
</dbReference>
<dbReference type="InterPro" id="IPR005251">
    <property type="entry name" value="IF-M1Pi"/>
</dbReference>
<dbReference type="InterPro" id="IPR042529">
    <property type="entry name" value="IF_2B-like_C"/>
</dbReference>
<dbReference type="InterPro" id="IPR011559">
    <property type="entry name" value="Initiation_fac_2B_a/b/d"/>
</dbReference>
<dbReference type="InterPro" id="IPR027363">
    <property type="entry name" value="M1Pi_N"/>
</dbReference>
<dbReference type="InterPro" id="IPR037171">
    <property type="entry name" value="NagB/RpiA_transferase-like"/>
</dbReference>
<dbReference type="NCBIfam" id="TIGR00524">
    <property type="entry name" value="eIF-2B_rel"/>
    <property type="match status" value="1"/>
</dbReference>
<dbReference type="NCBIfam" id="NF004326">
    <property type="entry name" value="PRK05720.1"/>
    <property type="match status" value="1"/>
</dbReference>
<dbReference type="NCBIfam" id="TIGR00512">
    <property type="entry name" value="salvage_mtnA"/>
    <property type="match status" value="1"/>
</dbReference>
<dbReference type="PANTHER" id="PTHR43475">
    <property type="entry name" value="METHYLTHIORIBOSE-1-PHOSPHATE ISOMERASE"/>
    <property type="match status" value="1"/>
</dbReference>
<dbReference type="PANTHER" id="PTHR43475:SF1">
    <property type="entry name" value="METHYLTHIORIBOSE-1-PHOSPHATE ISOMERASE"/>
    <property type="match status" value="1"/>
</dbReference>
<dbReference type="Pfam" id="PF01008">
    <property type="entry name" value="IF-2B"/>
    <property type="match status" value="1"/>
</dbReference>
<dbReference type="SUPFAM" id="SSF100950">
    <property type="entry name" value="NagB/RpiA/CoA transferase-like"/>
    <property type="match status" value="1"/>
</dbReference>
<name>MTNA_SERP5</name>
<accession>A8GAB1</accession>